<keyword id="KW-0997">Cell inner membrane</keyword>
<keyword id="KW-1003">Cell membrane</keyword>
<keyword id="KW-0472">Membrane</keyword>
<keyword id="KW-0762">Sugar transport</keyword>
<keyword id="KW-0769">Symport</keyword>
<keyword id="KW-0812">Transmembrane</keyword>
<keyword id="KW-1133">Transmembrane helix</keyword>
<keyword id="KW-0813">Transport</keyword>
<name>RHAT_MANSM</name>
<evidence type="ECO:0000255" key="1">
    <source>
        <dbReference type="HAMAP-Rule" id="MF_01532"/>
    </source>
</evidence>
<protein>
    <recommendedName>
        <fullName evidence="1">L-rhamnose-proton symporter</fullName>
    </recommendedName>
    <alternativeName>
        <fullName evidence="1">L-rhamnose-H(+) transport protein</fullName>
    </alternativeName>
</protein>
<proteinExistence type="inferred from homology"/>
<sequence>MGGSILLGIFWHFVGATSAACFYAPMKKVTNWSWETMWAIAGIFSWILLPWGISYWLLPDFGSYYSFFGSDILLPVFLFGAMWGIGNIGYGLTMRYLGMSMGIGIAIGITLIVGTLMTPIIQGRFGELLASTGGQMTLIGVVIAVVGVAVVSYAGLLKEKAIGVTAEEFNLKKGLALAVMCGIFSAGMSFAMSAATPMHEEAARLGVDPLYVALPSYVVIMGGGAIINLGFCIIRLITRPELSFKADMSVVKGLLISNILFSALGGIMWYFQFFFYAWGHANIPANYGFMSWMLHMSFYVLCGGIVGLLLHEWKDTGKKPTRVLCIGCLIIVLAANIVGLGMAN</sequence>
<feature type="chain" id="PRO_0000208276" description="L-rhamnose-proton symporter">
    <location>
        <begin position="1"/>
        <end position="344"/>
    </location>
</feature>
<feature type="transmembrane region" description="Helical" evidence="1">
    <location>
        <begin position="5"/>
        <end position="25"/>
    </location>
</feature>
<feature type="transmembrane region" description="Helical" evidence="1">
    <location>
        <begin position="38"/>
        <end position="58"/>
    </location>
</feature>
<feature type="transmembrane region" description="Helical" evidence="1">
    <location>
        <begin position="72"/>
        <end position="92"/>
    </location>
</feature>
<feature type="transmembrane region" description="Helical" evidence="1">
    <location>
        <begin position="101"/>
        <end position="121"/>
    </location>
</feature>
<feature type="transmembrane region" description="Helical" evidence="1">
    <location>
        <begin position="137"/>
        <end position="157"/>
    </location>
</feature>
<feature type="transmembrane region" description="Helical" evidence="1">
    <location>
        <begin position="175"/>
        <end position="195"/>
    </location>
</feature>
<feature type="transmembrane region" description="Helical" evidence="1">
    <location>
        <begin position="214"/>
        <end position="234"/>
    </location>
</feature>
<feature type="transmembrane region" description="Helical" evidence="1">
    <location>
        <begin position="259"/>
        <end position="279"/>
    </location>
</feature>
<feature type="transmembrane region" description="Helical" evidence="1">
    <location>
        <begin position="289"/>
        <end position="309"/>
    </location>
</feature>
<feature type="transmembrane region" description="Helical" evidence="1">
    <location>
        <begin position="323"/>
        <end position="343"/>
    </location>
</feature>
<dbReference type="EMBL" id="AE016827">
    <property type="protein sequence ID" value="AAU38933.1"/>
    <property type="molecule type" value="Genomic_DNA"/>
</dbReference>
<dbReference type="RefSeq" id="WP_011201471.1">
    <property type="nucleotide sequence ID" value="NC_006300.1"/>
</dbReference>
<dbReference type="STRING" id="221988.MS2326"/>
<dbReference type="KEGG" id="msu:MS2326"/>
<dbReference type="eggNOG" id="ENOG502Z7ID">
    <property type="taxonomic scope" value="Bacteria"/>
</dbReference>
<dbReference type="HOGENOM" id="CLU_066437_0_0_6"/>
<dbReference type="OrthoDB" id="9790043at2"/>
<dbReference type="Proteomes" id="UP000000607">
    <property type="component" value="Chromosome"/>
</dbReference>
<dbReference type="GO" id="GO:0005886">
    <property type="term" value="C:plasma membrane"/>
    <property type="evidence" value="ECO:0007669"/>
    <property type="project" value="UniProtKB-SubCell"/>
</dbReference>
<dbReference type="GO" id="GO:0015153">
    <property type="term" value="F:rhamnose transmembrane transporter activity"/>
    <property type="evidence" value="ECO:0007669"/>
    <property type="project" value="UniProtKB-UniRule"/>
</dbReference>
<dbReference type="GO" id="GO:0015293">
    <property type="term" value="F:symporter activity"/>
    <property type="evidence" value="ECO:0007669"/>
    <property type="project" value="UniProtKB-KW"/>
</dbReference>
<dbReference type="HAMAP" id="MF_01532">
    <property type="entry name" value="RhaT"/>
    <property type="match status" value="1"/>
</dbReference>
<dbReference type="InterPro" id="IPR004673">
    <property type="entry name" value="L-rhamnose-proton_sym_RhaT"/>
</dbReference>
<dbReference type="NCBIfam" id="NF010021">
    <property type="entry name" value="PRK13499.1-1"/>
    <property type="match status" value="1"/>
</dbReference>
<dbReference type="NCBIfam" id="NF010023">
    <property type="entry name" value="PRK13499.1-3"/>
    <property type="match status" value="1"/>
</dbReference>
<dbReference type="Pfam" id="PF06379">
    <property type="entry name" value="RhaT"/>
    <property type="match status" value="1"/>
</dbReference>
<organism>
    <name type="scientific">Mannheimia succiniciproducens (strain KCTC 0769BP / MBEL55E)</name>
    <dbReference type="NCBI Taxonomy" id="221988"/>
    <lineage>
        <taxon>Bacteria</taxon>
        <taxon>Pseudomonadati</taxon>
        <taxon>Pseudomonadota</taxon>
        <taxon>Gammaproteobacteria</taxon>
        <taxon>Pasteurellales</taxon>
        <taxon>Pasteurellaceae</taxon>
        <taxon>Basfia</taxon>
    </lineage>
</organism>
<comment type="function">
    <text evidence="1">Uptake of L-rhamnose across the cytoplasmic membrane with the concomitant transport of protons into the cell (symport system).</text>
</comment>
<comment type="catalytic activity">
    <reaction evidence="1">
        <text>L-rhamnopyranose(in) + H(+)(in) = L-rhamnopyranose(out) + H(+)(out)</text>
        <dbReference type="Rhea" id="RHEA:29947"/>
        <dbReference type="ChEBI" id="CHEBI:15378"/>
        <dbReference type="ChEBI" id="CHEBI:62346"/>
    </reaction>
    <physiologicalReaction direction="right-to-left" evidence="1">
        <dbReference type="Rhea" id="RHEA:29949"/>
    </physiologicalReaction>
</comment>
<comment type="subcellular location">
    <subcellularLocation>
        <location evidence="1">Cell inner membrane</location>
        <topology evidence="1">Multi-pass membrane protein</topology>
    </subcellularLocation>
</comment>
<comment type="similarity">
    <text evidence="1">Belongs to the L-rhamnose transporter (TC 2.A.7.6) family.</text>
</comment>
<gene>
    <name evidence="1" type="primary">rhaT</name>
    <name type="ordered locus">MS2326</name>
</gene>
<accession>Q65Q27</accession>
<reference key="1">
    <citation type="journal article" date="2004" name="Nat. Biotechnol.">
        <title>The genome sequence of the capnophilic rumen bacterium Mannheimia succiniciproducens.</title>
        <authorList>
            <person name="Hong S.H."/>
            <person name="Kim J.S."/>
            <person name="Lee S.Y."/>
            <person name="In Y.H."/>
            <person name="Choi S.S."/>
            <person name="Rih J.-K."/>
            <person name="Kim C.H."/>
            <person name="Jeong H."/>
            <person name="Hur C.G."/>
            <person name="Kim J.J."/>
        </authorList>
    </citation>
    <scope>NUCLEOTIDE SEQUENCE [LARGE SCALE GENOMIC DNA]</scope>
    <source>
        <strain>KCTC 0769BP / MBEL55E</strain>
    </source>
</reference>